<organism>
    <name type="scientific">Saccharomyces cerevisiae (strain ATCC 204508 / S288c)</name>
    <name type="common">Baker's yeast</name>
    <dbReference type="NCBI Taxonomy" id="559292"/>
    <lineage>
        <taxon>Eukaryota</taxon>
        <taxon>Fungi</taxon>
        <taxon>Dikarya</taxon>
        <taxon>Ascomycota</taxon>
        <taxon>Saccharomycotina</taxon>
        <taxon>Saccharomycetes</taxon>
        <taxon>Saccharomycetales</taxon>
        <taxon>Saccharomycetaceae</taxon>
        <taxon>Saccharomyces</taxon>
    </lineage>
</organism>
<feature type="chain" id="PRO_0000202417" description="SWIRM domain-containing protein FUN19">
    <location>
        <begin position="1"/>
        <end position="413"/>
    </location>
</feature>
<feature type="domain" description="SWIRM" evidence="1">
    <location>
        <begin position="316"/>
        <end position="413"/>
    </location>
</feature>
<feature type="region of interest" description="Disordered" evidence="2">
    <location>
        <begin position="35"/>
        <end position="55"/>
    </location>
</feature>
<feature type="region of interest" description="Disordered" evidence="2">
    <location>
        <begin position="189"/>
        <end position="211"/>
    </location>
</feature>
<feature type="region of interest" description="Disordered" evidence="2">
    <location>
        <begin position="249"/>
        <end position="271"/>
    </location>
</feature>
<feature type="compositionally biased region" description="Low complexity" evidence="2">
    <location>
        <begin position="35"/>
        <end position="51"/>
    </location>
</feature>
<feature type="compositionally biased region" description="Low complexity" evidence="2">
    <location>
        <begin position="200"/>
        <end position="211"/>
    </location>
</feature>
<feature type="modified residue" description="Phosphothreonine" evidence="4">
    <location>
        <position position="194"/>
    </location>
</feature>
<feature type="modified residue" description="Phosphoserine" evidence="4 5">
    <location>
        <position position="207"/>
    </location>
</feature>
<feature type="modified residue" description="Phosphoserine" evidence="4">
    <location>
        <position position="211"/>
    </location>
</feature>
<feature type="sequence conflict" description="In Ref. 1; CAA44456." evidence="3" ref="1">
    <original>T</original>
    <variation>S</variation>
    <location>
        <position position="255"/>
    </location>
</feature>
<feature type="sequence conflict" description="In Ref. 1." evidence="3" ref="1">
    <original>L</original>
    <variation>S</variation>
    <location>
        <position position="369"/>
    </location>
</feature>
<sequence>MGLYSPESEKSQLNMNYIGKDDSQSIFRRLNQNLKASNNNNDSNKNGLNMSDYSNNSPYGRSYDVRINQNSQNNGNGCFSGSIDSLVDEHIIPSPPLSPKLESKISHNGSPRMASSVLVGSTPKGAVENVLFVKPVWPNGLSRKRYRYATYGFLSQYKIFSNLAQPYSKNIINRYNNLAYNARHKYSKYNDDMTPPPLPSSSSRLPSPLASPNLNRQARYNMRKQALYNNNLGKFESDTEWIPRKRKVYSPQRRTMTTSPHRAKKFSPSASTPHTNIASIEAIHDAPQYIPNVSWKKLPDYSPPLSTLPTDSNKSLKIEWKGSPMDLSTDPLRNELHPAELVLAQTLRLPCDLYLDSKRRLFLEKVYRLKKGLPFRRTDAQKACRIDVNKASRLFQAFEKVGWLQDSNFTKYL</sequence>
<keyword id="KW-0597">Phosphoprotein</keyword>
<keyword id="KW-1185">Reference proteome</keyword>
<evidence type="ECO:0000255" key="1">
    <source>
        <dbReference type="PROSITE-ProRule" id="PRU00247"/>
    </source>
</evidence>
<evidence type="ECO:0000256" key="2">
    <source>
        <dbReference type="SAM" id="MobiDB-lite"/>
    </source>
</evidence>
<evidence type="ECO:0000305" key="3"/>
<evidence type="ECO:0007744" key="4">
    <source>
    </source>
</evidence>
<evidence type="ECO:0007744" key="5">
    <source>
    </source>
</evidence>
<comment type="miscellaneous">
    <text>FUN19 is a non-essential gene.</text>
</comment>
<comment type="sequence caution" evidence="3">
    <conflict type="erroneous initiation">
        <sequence resource="EMBL-CDS" id="AAC04998"/>
    </conflict>
</comment>
<comment type="sequence caution" evidence="3">
    <conflict type="frameshift">
        <sequence resource="EMBL-CDS" id="CAA44456"/>
    </conflict>
</comment>
<gene>
    <name type="primary">FUN19</name>
    <name type="ordered locus">YAL034C</name>
</gene>
<protein>
    <recommendedName>
        <fullName>SWIRM domain-containing protein FUN19</fullName>
    </recommendedName>
</protein>
<proteinExistence type="evidence at protein level"/>
<dbReference type="EMBL" id="X62577">
    <property type="protein sequence ID" value="CAA44456.1"/>
    <property type="status" value="ALT_FRAME"/>
    <property type="molecule type" value="Genomic_DNA"/>
</dbReference>
<dbReference type="EMBL" id="U12980">
    <property type="protein sequence ID" value="AAC04998.1"/>
    <property type="status" value="ALT_INIT"/>
    <property type="molecule type" value="Genomic_DNA"/>
</dbReference>
<dbReference type="EMBL" id="BK006935">
    <property type="protein sequence ID" value="DAA06954.1"/>
    <property type="molecule type" value="Genomic_DNA"/>
</dbReference>
<dbReference type="PIR" id="S23410">
    <property type="entry name" value="S23410"/>
</dbReference>
<dbReference type="RefSeq" id="NP_009368.2">
    <property type="nucleotide sequence ID" value="NM_001180035.1"/>
</dbReference>
<dbReference type="SMR" id="P28003"/>
<dbReference type="BioGRID" id="31732">
    <property type="interactions" value="132"/>
</dbReference>
<dbReference type="DIP" id="DIP-6766N"/>
<dbReference type="FunCoup" id="P28003">
    <property type="interactions" value="142"/>
</dbReference>
<dbReference type="IntAct" id="P28003">
    <property type="interactions" value="27"/>
</dbReference>
<dbReference type="MINT" id="P28003"/>
<dbReference type="STRING" id="4932.YAL034C"/>
<dbReference type="iPTMnet" id="P28003"/>
<dbReference type="PaxDb" id="4932-YAL034C"/>
<dbReference type="PeptideAtlas" id="P28003"/>
<dbReference type="TopDownProteomics" id="P28003"/>
<dbReference type="EnsemblFungi" id="YAL034C_mRNA">
    <property type="protein sequence ID" value="YAL034C"/>
    <property type="gene ID" value="YAL034C"/>
</dbReference>
<dbReference type="GeneID" id="851199"/>
<dbReference type="KEGG" id="sce:YAL034C"/>
<dbReference type="AGR" id="SGD:S000002134"/>
<dbReference type="SGD" id="S000002134">
    <property type="gene designation" value="FUN19"/>
</dbReference>
<dbReference type="VEuPathDB" id="FungiDB:YAL034C"/>
<dbReference type="eggNOG" id="ENOG502R6VN">
    <property type="taxonomic scope" value="Eukaryota"/>
</dbReference>
<dbReference type="GeneTree" id="ENSGT00940000176451"/>
<dbReference type="HOGENOM" id="CLU_042442_0_0_1"/>
<dbReference type="InParanoid" id="P28003"/>
<dbReference type="OMA" id="YATHGFL"/>
<dbReference type="OrthoDB" id="5598695at2759"/>
<dbReference type="BioCyc" id="YEAST:G3O-28891-MONOMER"/>
<dbReference type="Reactome" id="R-SCE-5689880">
    <property type="pathway name" value="Ub-specific processing proteases"/>
</dbReference>
<dbReference type="BioGRID-ORCS" id="851199">
    <property type="hits" value="1 hit in 10 CRISPR screens"/>
</dbReference>
<dbReference type="PRO" id="PR:P28003"/>
<dbReference type="Proteomes" id="UP000002311">
    <property type="component" value="Chromosome I"/>
</dbReference>
<dbReference type="RNAct" id="P28003">
    <property type="molecule type" value="protein"/>
</dbReference>
<dbReference type="GO" id="GO:0005634">
    <property type="term" value="C:nucleus"/>
    <property type="evidence" value="ECO:0000318"/>
    <property type="project" value="GO_Central"/>
</dbReference>
<dbReference type="GO" id="GO:0070210">
    <property type="term" value="C:Rpd3L-Expanded complex"/>
    <property type="evidence" value="ECO:0000318"/>
    <property type="project" value="GO_Central"/>
</dbReference>
<dbReference type="GO" id="GO:0003682">
    <property type="term" value="F:chromatin binding"/>
    <property type="evidence" value="ECO:0000318"/>
    <property type="project" value="GO_Central"/>
</dbReference>
<dbReference type="GO" id="GO:0003713">
    <property type="term" value="F:transcription coactivator activity"/>
    <property type="evidence" value="ECO:0000318"/>
    <property type="project" value="GO_Central"/>
</dbReference>
<dbReference type="GO" id="GO:0006338">
    <property type="term" value="P:chromatin remodeling"/>
    <property type="evidence" value="ECO:0000318"/>
    <property type="project" value="GO_Central"/>
</dbReference>
<dbReference type="GO" id="GO:0006357">
    <property type="term" value="P:regulation of transcription by RNA polymerase II"/>
    <property type="evidence" value="ECO:0000318"/>
    <property type="project" value="GO_Central"/>
</dbReference>
<dbReference type="FunFam" id="1.10.10.10:FF:000087">
    <property type="entry name" value="Transcriptional adapter 2"/>
    <property type="match status" value="1"/>
</dbReference>
<dbReference type="Gene3D" id="1.10.10.10">
    <property type="entry name" value="Winged helix-like DNA-binding domain superfamily/Winged helix DNA-binding domain"/>
    <property type="match status" value="1"/>
</dbReference>
<dbReference type="InterPro" id="IPR009057">
    <property type="entry name" value="Homeodomain-like_sf"/>
</dbReference>
<dbReference type="InterPro" id="IPR007526">
    <property type="entry name" value="SWIRM"/>
</dbReference>
<dbReference type="InterPro" id="IPR036388">
    <property type="entry name" value="WH-like_DNA-bd_sf"/>
</dbReference>
<dbReference type="PANTHER" id="PTHR12374:SF21">
    <property type="entry name" value="SWIRM DOMAIN-CONTAINING PROTEIN FUN19-RELATED"/>
    <property type="match status" value="1"/>
</dbReference>
<dbReference type="PANTHER" id="PTHR12374">
    <property type="entry name" value="TRANSCRIPTIONAL ADAPTOR 2 ADA2 -RELATED"/>
    <property type="match status" value="1"/>
</dbReference>
<dbReference type="Pfam" id="PF04433">
    <property type="entry name" value="SWIRM"/>
    <property type="match status" value="1"/>
</dbReference>
<dbReference type="SUPFAM" id="SSF46689">
    <property type="entry name" value="Homeodomain-like"/>
    <property type="match status" value="1"/>
</dbReference>
<dbReference type="PROSITE" id="PS50934">
    <property type="entry name" value="SWIRM"/>
    <property type="match status" value="1"/>
</dbReference>
<reference key="1">
    <citation type="journal article" date="1992" name="J. Mol. Biol.">
        <title>Molecular analysis of Saccharomyces cerevisiae chromosome I. On the number of genes and the identification of essential genes using temperature-sensitive-lethal mutations.</title>
        <authorList>
            <person name="Harris S.D."/>
            <person name="Cheng J."/>
            <person name="Pugh T.A."/>
            <person name="Pringle J.R."/>
        </authorList>
    </citation>
    <scope>NUCLEOTIDE SEQUENCE [GENOMIC DNA]</scope>
</reference>
<reference key="2">
    <citation type="journal article" date="1995" name="Proc. Natl. Acad. Sci. U.S.A.">
        <title>The nucleotide sequence of chromosome I from Saccharomyces cerevisiae.</title>
        <authorList>
            <person name="Bussey H."/>
            <person name="Kaback D.B."/>
            <person name="Zhong W.-W."/>
            <person name="Vo D.H."/>
            <person name="Clark M.W."/>
            <person name="Fortin N."/>
            <person name="Hall J."/>
            <person name="Ouellette B.F.F."/>
            <person name="Keng T."/>
            <person name="Barton A.B."/>
            <person name="Su Y."/>
            <person name="Davies C.J."/>
            <person name="Storms R.K."/>
        </authorList>
    </citation>
    <scope>NUCLEOTIDE SEQUENCE [LARGE SCALE GENOMIC DNA]</scope>
    <source>
        <strain>ATCC 204508 / S288c</strain>
    </source>
</reference>
<reference key="3">
    <citation type="submission" date="1996-04" db="EMBL/GenBank/DDBJ databases">
        <authorList>
            <person name="Vo D.T."/>
        </authorList>
    </citation>
    <scope>SEQUENCE REVISION</scope>
</reference>
<reference key="4">
    <citation type="journal article" date="2014" name="G3 (Bethesda)">
        <title>The reference genome sequence of Saccharomyces cerevisiae: Then and now.</title>
        <authorList>
            <person name="Engel S.R."/>
            <person name="Dietrich F.S."/>
            <person name="Fisk D.G."/>
            <person name="Binkley G."/>
            <person name="Balakrishnan R."/>
            <person name="Costanzo M.C."/>
            <person name="Dwight S.S."/>
            <person name="Hitz B.C."/>
            <person name="Karra K."/>
            <person name="Nash R.S."/>
            <person name="Weng S."/>
            <person name="Wong E.D."/>
            <person name="Lloyd P."/>
            <person name="Skrzypek M.S."/>
            <person name="Miyasato S.R."/>
            <person name="Simison M."/>
            <person name="Cherry J.M."/>
        </authorList>
    </citation>
    <scope>GENOME REANNOTATION</scope>
    <source>
        <strain>ATCC 204508 / S288c</strain>
    </source>
</reference>
<reference key="5">
    <citation type="journal article" date="2003" name="Nature">
        <title>Sequencing and comparison of yeast species to identify genes and regulatory elements.</title>
        <authorList>
            <person name="Kellis M."/>
            <person name="Patterson N."/>
            <person name="Endrizzi M."/>
            <person name="Birren B.W."/>
            <person name="Lander E.S."/>
        </authorList>
    </citation>
    <scope>IDENTIFICATION OF PROBABLE INITIATION SITE</scope>
</reference>
<reference key="6">
    <citation type="journal article" date="2008" name="Mol. Cell. Proteomics">
        <title>A multidimensional chromatography technology for in-depth phosphoproteome analysis.</title>
        <authorList>
            <person name="Albuquerque C.P."/>
            <person name="Smolka M.B."/>
            <person name="Payne S.H."/>
            <person name="Bafna V."/>
            <person name="Eng J."/>
            <person name="Zhou H."/>
        </authorList>
    </citation>
    <scope>PHOSPHORYLATION [LARGE SCALE ANALYSIS] AT THR-194; SER-207 AND SER-211</scope>
    <scope>IDENTIFICATION BY MASS SPECTROMETRY [LARGE SCALE ANALYSIS]</scope>
</reference>
<reference key="7">
    <citation type="journal article" date="2009" name="Science">
        <title>Global analysis of Cdk1 substrate phosphorylation sites provides insights into evolution.</title>
        <authorList>
            <person name="Holt L.J."/>
            <person name="Tuch B.B."/>
            <person name="Villen J."/>
            <person name="Johnson A.D."/>
            <person name="Gygi S.P."/>
            <person name="Morgan D.O."/>
        </authorList>
    </citation>
    <scope>PHOSPHORYLATION [LARGE SCALE ANALYSIS] AT SER-207</scope>
    <scope>IDENTIFICATION BY MASS SPECTROMETRY [LARGE SCALE ANALYSIS]</scope>
</reference>
<accession>P28003</accession>
<accession>D6VPI4</accession>
<name>FUN19_YEAST</name>